<evidence type="ECO:0000250" key="1"/>
<evidence type="ECO:0000250" key="2">
    <source>
        <dbReference type="UniProtKB" id="Q99471"/>
    </source>
</evidence>
<evidence type="ECO:0000305" key="3"/>
<organism>
    <name type="scientific">Mus musculus</name>
    <name type="common">Mouse</name>
    <dbReference type="NCBI Taxonomy" id="10090"/>
    <lineage>
        <taxon>Eukaryota</taxon>
        <taxon>Metazoa</taxon>
        <taxon>Chordata</taxon>
        <taxon>Craniata</taxon>
        <taxon>Vertebrata</taxon>
        <taxon>Euteleostomi</taxon>
        <taxon>Mammalia</taxon>
        <taxon>Eutheria</taxon>
        <taxon>Euarchontoglires</taxon>
        <taxon>Glires</taxon>
        <taxon>Rodentia</taxon>
        <taxon>Myomorpha</taxon>
        <taxon>Muroidea</taxon>
        <taxon>Muridae</taxon>
        <taxon>Murinae</taxon>
        <taxon>Mus</taxon>
        <taxon>Mus</taxon>
    </lineage>
</organism>
<gene>
    <name type="primary">Pfdn5</name>
    <name type="synonym">Eig1</name>
    <name type="synonym">Mm1</name>
    <name type="synonym">Pfd5</name>
</gene>
<sequence>MAQSINITELNLPQLEMLKNQLDQEVEFLSTSIAQLKVVQTKYVEAKDCLNVLNKSNEGKELLVPLTSSMYVPGKLHDVEHVLIDVGTGYYVEKTAEDAKDFFKRKIDFLTKQMEKIQPALQEKHAMKQAVMEMMSQKIQQLTALGAAQATVKA</sequence>
<name>PFD5_MOUSE</name>
<protein>
    <recommendedName>
        <fullName>Prefoldin subunit 5</fullName>
    </recommendedName>
    <alternativeName>
        <fullName>EIG-1</fullName>
    </alternativeName>
    <alternativeName>
        <fullName>Myc modulator 1</fullName>
    </alternativeName>
    <alternativeName>
        <fullName>c-Myc-binding protein Mm-1</fullName>
    </alternativeName>
</protein>
<accession>Q9WU28</accession>
<accession>Q3UKS8</accession>
<accession>Q9JMJ8</accession>
<reference key="1">
    <citation type="submission" date="1998-11" db="EMBL/GenBank/DDBJ databases">
        <title>Molecular cloning of murine MM-1 and its expression.</title>
        <authorList>
            <person name="Inazu T."/>
            <person name="Myint Z."/>
            <person name="Noguchi T."/>
        </authorList>
    </citation>
    <scope>NUCLEOTIDE SEQUENCE [MRNA]</scope>
    <source>
        <tissue>Brain</tissue>
    </source>
</reference>
<reference key="2">
    <citation type="submission" date="1998-02" db="EMBL/GenBank/DDBJ databases">
        <title>Eig1 gene.</title>
        <authorList>
            <person name="Oyamatsu T."/>
            <person name="Kotani S."/>
            <person name="Todokoro K."/>
        </authorList>
    </citation>
    <scope>NUCLEOTIDE SEQUENCE [MRNA]</scope>
</reference>
<reference key="3">
    <citation type="journal article" date="2005" name="Science">
        <title>The transcriptional landscape of the mammalian genome.</title>
        <authorList>
            <person name="Carninci P."/>
            <person name="Kasukawa T."/>
            <person name="Katayama S."/>
            <person name="Gough J."/>
            <person name="Frith M.C."/>
            <person name="Maeda N."/>
            <person name="Oyama R."/>
            <person name="Ravasi T."/>
            <person name="Lenhard B."/>
            <person name="Wells C."/>
            <person name="Kodzius R."/>
            <person name="Shimokawa K."/>
            <person name="Bajic V.B."/>
            <person name="Brenner S.E."/>
            <person name="Batalov S."/>
            <person name="Forrest A.R."/>
            <person name="Zavolan M."/>
            <person name="Davis M.J."/>
            <person name="Wilming L.G."/>
            <person name="Aidinis V."/>
            <person name="Allen J.E."/>
            <person name="Ambesi-Impiombato A."/>
            <person name="Apweiler R."/>
            <person name="Aturaliya R.N."/>
            <person name="Bailey T.L."/>
            <person name="Bansal M."/>
            <person name="Baxter L."/>
            <person name="Beisel K.W."/>
            <person name="Bersano T."/>
            <person name="Bono H."/>
            <person name="Chalk A.M."/>
            <person name="Chiu K.P."/>
            <person name="Choudhary V."/>
            <person name="Christoffels A."/>
            <person name="Clutterbuck D.R."/>
            <person name="Crowe M.L."/>
            <person name="Dalla E."/>
            <person name="Dalrymple B.P."/>
            <person name="de Bono B."/>
            <person name="Della Gatta G."/>
            <person name="di Bernardo D."/>
            <person name="Down T."/>
            <person name="Engstrom P."/>
            <person name="Fagiolini M."/>
            <person name="Faulkner G."/>
            <person name="Fletcher C.F."/>
            <person name="Fukushima T."/>
            <person name="Furuno M."/>
            <person name="Futaki S."/>
            <person name="Gariboldi M."/>
            <person name="Georgii-Hemming P."/>
            <person name="Gingeras T.R."/>
            <person name="Gojobori T."/>
            <person name="Green R.E."/>
            <person name="Gustincich S."/>
            <person name="Harbers M."/>
            <person name="Hayashi Y."/>
            <person name="Hensch T.K."/>
            <person name="Hirokawa N."/>
            <person name="Hill D."/>
            <person name="Huminiecki L."/>
            <person name="Iacono M."/>
            <person name="Ikeo K."/>
            <person name="Iwama A."/>
            <person name="Ishikawa T."/>
            <person name="Jakt M."/>
            <person name="Kanapin A."/>
            <person name="Katoh M."/>
            <person name="Kawasawa Y."/>
            <person name="Kelso J."/>
            <person name="Kitamura H."/>
            <person name="Kitano H."/>
            <person name="Kollias G."/>
            <person name="Krishnan S.P."/>
            <person name="Kruger A."/>
            <person name="Kummerfeld S.K."/>
            <person name="Kurochkin I.V."/>
            <person name="Lareau L.F."/>
            <person name="Lazarevic D."/>
            <person name="Lipovich L."/>
            <person name="Liu J."/>
            <person name="Liuni S."/>
            <person name="McWilliam S."/>
            <person name="Madan Babu M."/>
            <person name="Madera M."/>
            <person name="Marchionni L."/>
            <person name="Matsuda H."/>
            <person name="Matsuzawa S."/>
            <person name="Miki H."/>
            <person name="Mignone F."/>
            <person name="Miyake S."/>
            <person name="Morris K."/>
            <person name="Mottagui-Tabar S."/>
            <person name="Mulder N."/>
            <person name="Nakano N."/>
            <person name="Nakauchi H."/>
            <person name="Ng P."/>
            <person name="Nilsson R."/>
            <person name="Nishiguchi S."/>
            <person name="Nishikawa S."/>
            <person name="Nori F."/>
            <person name="Ohara O."/>
            <person name="Okazaki Y."/>
            <person name="Orlando V."/>
            <person name="Pang K.C."/>
            <person name="Pavan W.J."/>
            <person name="Pavesi G."/>
            <person name="Pesole G."/>
            <person name="Petrovsky N."/>
            <person name="Piazza S."/>
            <person name="Reed J."/>
            <person name="Reid J.F."/>
            <person name="Ring B.Z."/>
            <person name="Ringwald M."/>
            <person name="Rost B."/>
            <person name="Ruan Y."/>
            <person name="Salzberg S.L."/>
            <person name="Sandelin A."/>
            <person name="Schneider C."/>
            <person name="Schoenbach C."/>
            <person name="Sekiguchi K."/>
            <person name="Semple C.A."/>
            <person name="Seno S."/>
            <person name="Sessa L."/>
            <person name="Sheng Y."/>
            <person name="Shibata Y."/>
            <person name="Shimada H."/>
            <person name="Shimada K."/>
            <person name="Silva D."/>
            <person name="Sinclair B."/>
            <person name="Sperling S."/>
            <person name="Stupka E."/>
            <person name="Sugiura K."/>
            <person name="Sultana R."/>
            <person name="Takenaka Y."/>
            <person name="Taki K."/>
            <person name="Tammoja K."/>
            <person name="Tan S.L."/>
            <person name="Tang S."/>
            <person name="Taylor M.S."/>
            <person name="Tegner J."/>
            <person name="Teichmann S.A."/>
            <person name="Ueda H.R."/>
            <person name="van Nimwegen E."/>
            <person name="Verardo R."/>
            <person name="Wei C.L."/>
            <person name="Yagi K."/>
            <person name="Yamanishi H."/>
            <person name="Zabarovsky E."/>
            <person name="Zhu S."/>
            <person name="Zimmer A."/>
            <person name="Hide W."/>
            <person name="Bult C."/>
            <person name="Grimmond S.M."/>
            <person name="Teasdale R.D."/>
            <person name="Liu E.T."/>
            <person name="Brusic V."/>
            <person name="Quackenbush J."/>
            <person name="Wahlestedt C."/>
            <person name="Mattick J.S."/>
            <person name="Hume D.A."/>
            <person name="Kai C."/>
            <person name="Sasaki D."/>
            <person name="Tomaru Y."/>
            <person name="Fukuda S."/>
            <person name="Kanamori-Katayama M."/>
            <person name="Suzuki M."/>
            <person name="Aoki J."/>
            <person name="Arakawa T."/>
            <person name="Iida J."/>
            <person name="Imamura K."/>
            <person name="Itoh M."/>
            <person name="Kato T."/>
            <person name="Kawaji H."/>
            <person name="Kawagashira N."/>
            <person name="Kawashima T."/>
            <person name="Kojima M."/>
            <person name="Kondo S."/>
            <person name="Konno H."/>
            <person name="Nakano K."/>
            <person name="Ninomiya N."/>
            <person name="Nishio T."/>
            <person name="Okada M."/>
            <person name="Plessy C."/>
            <person name="Shibata K."/>
            <person name="Shiraki T."/>
            <person name="Suzuki S."/>
            <person name="Tagami M."/>
            <person name="Waki K."/>
            <person name="Watahiki A."/>
            <person name="Okamura-Oho Y."/>
            <person name="Suzuki H."/>
            <person name="Kawai J."/>
            <person name="Hayashizaki Y."/>
        </authorList>
    </citation>
    <scope>NUCLEOTIDE SEQUENCE [LARGE SCALE MRNA]</scope>
    <source>
        <strain>C57BL/6J</strain>
        <tissue>Placenta</tissue>
    </source>
</reference>
<reference key="4">
    <citation type="journal article" date="2004" name="Genome Res.">
        <title>The status, quality, and expansion of the NIH full-length cDNA project: the Mammalian Gene Collection (MGC).</title>
        <authorList>
            <consortium name="The MGC Project Team"/>
        </authorList>
    </citation>
    <scope>NUCLEOTIDE SEQUENCE [LARGE SCALE MRNA]</scope>
    <source>
        <strain>C57BL/6J</strain>
        <tissue>Mammary gland</tissue>
    </source>
</reference>
<reference key="5">
    <citation type="journal article" date="2010" name="Cell">
        <title>A tissue-specific atlas of mouse protein phosphorylation and expression.</title>
        <authorList>
            <person name="Huttlin E.L."/>
            <person name="Jedrychowski M.P."/>
            <person name="Elias J.E."/>
            <person name="Goswami T."/>
            <person name="Rad R."/>
            <person name="Beausoleil S.A."/>
            <person name="Villen J."/>
            <person name="Haas W."/>
            <person name="Sowa M.E."/>
            <person name="Gygi S.P."/>
        </authorList>
    </citation>
    <scope>IDENTIFICATION BY MASS SPECTROMETRY [LARGE SCALE ANALYSIS]</scope>
    <source>
        <tissue>Brain</tissue>
        <tissue>Brown adipose tissue</tissue>
        <tissue>Heart</tissue>
        <tissue>Kidney</tissue>
        <tissue>Liver</tissue>
        <tissue>Lung</tissue>
        <tissue>Pancreas</tissue>
        <tissue>Spleen</tissue>
        <tissue>Testis</tissue>
    </source>
</reference>
<comment type="function">
    <text evidence="1">Binds specifically to cytosolic chaperonin (c-CPN) and transfers target proteins to it. Binds to nascent polypeptide chain and promotes folding in an environment in which there are many competing pathways for nonnative proteins. Represses the transcriptional activity of MYC (By similarity).</text>
</comment>
<comment type="subunit">
    <text evidence="1">Heterohexamer of two PFD-alpha type and four PFD-beta type subunits.</text>
</comment>
<comment type="subcellular location">
    <subcellularLocation>
        <location evidence="1">Nucleus</location>
    </subcellularLocation>
</comment>
<comment type="similarity">
    <text evidence="3">Belongs to the prefoldin subunit alpha family.</text>
</comment>
<comment type="sequence caution" evidence="3">
    <conflict type="erroneous initiation">
        <sequence resource="EMBL-CDS" id="BAA92269"/>
    </conflict>
</comment>
<keyword id="KW-0007">Acetylation</keyword>
<keyword id="KW-0143">Chaperone</keyword>
<keyword id="KW-0539">Nucleus</keyword>
<keyword id="KW-0597">Phosphoprotein</keyword>
<keyword id="KW-1185">Reference proteome</keyword>
<dbReference type="EMBL" id="AF108357">
    <property type="protein sequence ID" value="AAD28373.1"/>
    <property type="molecule type" value="mRNA"/>
</dbReference>
<dbReference type="EMBL" id="AB011473">
    <property type="protein sequence ID" value="BAA92269.1"/>
    <property type="status" value="ALT_INIT"/>
    <property type="molecule type" value="mRNA"/>
</dbReference>
<dbReference type="EMBL" id="AK028206">
    <property type="protein sequence ID" value="BAC25814.1"/>
    <property type="molecule type" value="mRNA"/>
</dbReference>
<dbReference type="EMBL" id="AK145883">
    <property type="protein sequence ID" value="BAE26723.1"/>
    <property type="molecule type" value="mRNA"/>
</dbReference>
<dbReference type="EMBL" id="BC026920">
    <property type="protein sequence ID" value="AAH26920.1"/>
    <property type="molecule type" value="mRNA"/>
</dbReference>
<dbReference type="CCDS" id="CCDS37227.1"/>
<dbReference type="RefSeq" id="NP_081320.2">
    <property type="nucleotide sequence ID" value="NM_027044.3"/>
</dbReference>
<dbReference type="SMR" id="Q9WU28"/>
<dbReference type="BioGRID" id="208102">
    <property type="interactions" value="28"/>
</dbReference>
<dbReference type="FunCoup" id="Q9WU28">
    <property type="interactions" value="2442"/>
</dbReference>
<dbReference type="STRING" id="10090.ENSMUSP00000129178"/>
<dbReference type="iPTMnet" id="Q9WU28"/>
<dbReference type="PhosphoSitePlus" id="Q9WU28"/>
<dbReference type="jPOST" id="Q9WU28"/>
<dbReference type="PaxDb" id="10090-ENSMUSP00000129178"/>
<dbReference type="PeptideAtlas" id="Q9WU28"/>
<dbReference type="ProteomicsDB" id="301795"/>
<dbReference type="Pumba" id="Q9WU28"/>
<dbReference type="Antibodypedia" id="1782">
    <property type="antibodies" value="253 antibodies from 28 providers"/>
</dbReference>
<dbReference type="DNASU" id="56612"/>
<dbReference type="Ensembl" id="ENSMUST00000166658.8">
    <property type="protein sequence ID" value="ENSMUSP00000129178.2"/>
    <property type="gene ID" value="ENSMUSG00000001289.13"/>
</dbReference>
<dbReference type="GeneID" id="56612"/>
<dbReference type="KEGG" id="mmu:56612"/>
<dbReference type="UCSC" id="uc007xvh.1">
    <property type="organism name" value="mouse"/>
</dbReference>
<dbReference type="AGR" id="MGI:1928753"/>
<dbReference type="CTD" id="5204"/>
<dbReference type="MGI" id="MGI:1928753">
    <property type="gene designation" value="Pfdn5"/>
</dbReference>
<dbReference type="VEuPathDB" id="HostDB:ENSMUSG00000001289"/>
<dbReference type="eggNOG" id="KOG3048">
    <property type="taxonomic scope" value="Eukaryota"/>
</dbReference>
<dbReference type="GeneTree" id="ENSGT00390000008783"/>
<dbReference type="HOGENOM" id="CLU_091867_0_1_1"/>
<dbReference type="InParanoid" id="Q9WU28"/>
<dbReference type="OMA" id="QAKFKAC"/>
<dbReference type="OrthoDB" id="10267474at2759"/>
<dbReference type="PhylomeDB" id="Q9WU28"/>
<dbReference type="TreeFam" id="TF106509"/>
<dbReference type="BioGRID-ORCS" id="56612">
    <property type="hits" value="27 hits in 81 CRISPR screens"/>
</dbReference>
<dbReference type="ChiTaRS" id="Pfdn5">
    <property type="organism name" value="mouse"/>
</dbReference>
<dbReference type="PRO" id="PR:Q9WU28"/>
<dbReference type="Proteomes" id="UP000000589">
    <property type="component" value="Chromosome 15"/>
</dbReference>
<dbReference type="RNAct" id="Q9WU28">
    <property type="molecule type" value="protein"/>
</dbReference>
<dbReference type="Bgee" id="ENSMUSG00000001289">
    <property type="expression patterns" value="Expressed in floor plate of midbrain and 246 other cell types or tissues"/>
</dbReference>
<dbReference type="ExpressionAtlas" id="Q9WU28">
    <property type="expression patterns" value="baseline and differential"/>
</dbReference>
<dbReference type="GO" id="GO:0005829">
    <property type="term" value="C:cytosol"/>
    <property type="evidence" value="ECO:0007669"/>
    <property type="project" value="Ensembl"/>
</dbReference>
<dbReference type="GO" id="GO:0045111">
    <property type="term" value="C:intermediate filament cytoskeleton"/>
    <property type="evidence" value="ECO:0007669"/>
    <property type="project" value="Ensembl"/>
</dbReference>
<dbReference type="GO" id="GO:0005634">
    <property type="term" value="C:nucleus"/>
    <property type="evidence" value="ECO:0007669"/>
    <property type="project" value="UniProtKB-SubCell"/>
</dbReference>
<dbReference type="GO" id="GO:0016272">
    <property type="term" value="C:prefoldin complex"/>
    <property type="evidence" value="ECO:0007669"/>
    <property type="project" value="Ensembl"/>
</dbReference>
<dbReference type="GO" id="GO:0001540">
    <property type="term" value="F:amyloid-beta binding"/>
    <property type="evidence" value="ECO:0007669"/>
    <property type="project" value="Ensembl"/>
</dbReference>
<dbReference type="GO" id="GO:0051082">
    <property type="term" value="F:unfolded protein binding"/>
    <property type="evidence" value="ECO:0007669"/>
    <property type="project" value="Ensembl"/>
</dbReference>
<dbReference type="GO" id="GO:1905907">
    <property type="term" value="P:negative regulation of amyloid fibril formation"/>
    <property type="evidence" value="ECO:0007669"/>
    <property type="project" value="Ensembl"/>
</dbReference>
<dbReference type="GO" id="GO:0090090">
    <property type="term" value="P:negative regulation of canonical Wnt signaling pathway"/>
    <property type="evidence" value="ECO:0007669"/>
    <property type="project" value="Ensembl"/>
</dbReference>
<dbReference type="GO" id="GO:0045892">
    <property type="term" value="P:negative regulation of DNA-templated transcription"/>
    <property type="evidence" value="ECO:0007669"/>
    <property type="project" value="Ensembl"/>
</dbReference>
<dbReference type="GO" id="GO:0006457">
    <property type="term" value="P:protein folding"/>
    <property type="evidence" value="ECO:0007669"/>
    <property type="project" value="Ensembl"/>
</dbReference>
<dbReference type="GO" id="GO:0060041">
    <property type="term" value="P:retina development in camera-type eye"/>
    <property type="evidence" value="ECO:0000315"/>
    <property type="project" value="MGI"/>
</dbReference>
<dbReference type="CDD" id="cd23157">
    <property type="entry name" value="Prefoldin_5"/>
    <property type="match status" value="1"/>
</dbReference>
<dbReference type="FunFam" id="1.10.287.370:FF:000004">
    <property type="entry name" value="Probable prefoldin subunit 5"/>
    <property type="match status" value="1"/>
</dbReference>
<dbReference type="Gene3D" id="1.10.287.370">
    <property type="match status" value="1"/>
</dbReference>
<dbReference type="HAMAP" id="MF_00308">
    <property type="entry name" value="PfdA"/>
    <property type="match status" value="1"/>
</dbReference>
<dbReference type="InterPro" id="IPR011599">
    <property type="entry name" value="PFD_alpha_archaea"/>
</dbReference>
<dbReference type="InterPro" id="IPR009053">
    <property type="entry name" value="Prefoldin"/>
</dbReference>
<dbReference type="InterPro" id="IPR004127">
    <property type="entry name" value="Prefoldin_subunit_alpha"/>
</dbReference>
<dbReference type="NCBIfam" id="TIGR00293">
    <property type="entry name" value="prefoldin subunit alpha"/>
    <property type="match status" value="1"/>
</dbReference>
<dbReference type="PANTHER" id="PTHR12674">
    <property type="entry name" value="PREFOLDIN SUBUNIT 5"/>
    <property type="match status" value="1"/>
</dbReference>
<dbReference type="PANTHER" id="PTHR12674:SF2">
    <property type="entry name" value="PREFOLDIN SUBUNIT 5"/>
    <property type="match status" value="1"/>
</dbReference>
<dbReference type="Pfam" id="PF02996">
    <property type="entry name" value="Prefoldin"/>
    <property type="match status" value="1"/>
</dbReference>
<dbReference type="SUPFAM" id="SSF46579">
    <property type="entry name" value="Prefoldin"/>
    <property type="match status" value="1"/>
</dbReference>
<feature type="initiator methionine" description="Removed" evidence="2">
    <location>
        <position position="1"/>
    </location>
</feature>
<feature type="chain" id="PRO_0000153662" description="Prefoldin subunit 5">
    <location>
        <begin position="2"/>
        <end position="154"/>
    </location>
</feature>
<feature type="modified residue" description="N-acetylalanine" evidence="2">
    <location>
        <position position="2"/>
    </location>
</feature>
<feature type="modified residue" description="N6-acetyllysine" evidence="2">
    <location>
        <position position="42"/>
    </location>
</feature>
<feature type="modified residue" description="Phosphoserine" evidence="2">
    <location>
        <position position="56"/>
    </location>
</feature>
<proteinExistence type="evidence at protein level"/>